<accession>Q6LVS1</accession>
<protein>
    <recommendedName>
        <fullName evidence="1">LexA repressor</fullName>
        <ecNumber evidence="1">3.4.21.88</ecNumber>
    </recommendedName>
</protein>
<keyword id="KW-0068">Autocatalytic cleavage</keyword>
<keyword id="KW-0227">DNA damage</keyword>
<keyword id="KW-0234">DNA repair</keyword>
<keyword id="KW-0235">DNA replication</keyword>
<keyword id="KW-0238">DNA-binding</keyword>
<keyword id="KW-0378">Hydrolase</keyword>
<keyword id="KW-1185">Reference proteome</keyword>
<keyword id="KW-0678">Repressor</keyword>
<keyword id="KW-0742">SOS response</keyword>
<keyword id="KW-0804">Transcription</keyword>
<keyword id="KW-0805">Transcription regulation</keyword>
<organism>
    <name type="scientific">Photobacterium profundum (strain SS9)</name>
    <dbReference type="NCBI Taxonomy" id="298386"/>
    <lineage>
        <taxon>Bacteria</taxon>
        <taxon>Pseudomonadati</taxon>
        <taxon>Pseudomonadota</taxon>
        <taxon>Gammaproteobacteria</taxon>
        <taxon>Vibrionales</taxon>
        <taxon>Vibrionaceae</taxon>
        <taxon>Photobacterium</taxon>
    </lineage>
</organism>
<dbReference type="EC" id="3.4.21.88" evidence="1"/>
<dbReference type="EMBL" id="CR378663">
    <property type="protein sequence ID" value="CAG18604.1"/>
    <property type="molecule type" value="Genomic_DNA"/>
</dbReference>
<dbReference type="SMR" id="Q6LVS1"/>
<dbReference type="STRING" id="298386.PBPRA0165"/>
<dbReference type="MEROPS" id="S24.001"/>
<dbReference type="KEGG" id="ppr:PBPRA0165"/>
<dbReference type="eggNOG" id="COG1974">
    <property type="taxonomic scope" value="Bacteria"/>
</dbReference>
<dbReference type="HOGENOM" id="CLU_066192_45_3_6"/>
<dbReference type="Proteomes" id="UP000000593">
    <property type="component" value="Chromosome 1"/>
</dbReference>
<dbReference type="GO" id="GO:0003677">
    <property type="term" value="F:DNA binding"/>
    <property type="evidence" value="ECO:0007669"/>
    <property type="project" value="UniProtKB-UniRule"/>
</dbReference>
<dbReference type="GO" id="GO:0004252">
    <property type="term" value="F:serine-type endopeptidase activity"/>
    <property type="evidence" value="ECO:0007669"/>
    <property type="project" value="UniProtKB-UniRule"/>
</dbReference>
<dbReference type="GO" id="GO:0006281">
    <property type="term" value="P:DNA repair"/>
    <property type="evidence" value="ECO:0007669"/>
    <property type="project" value="UniProtKB-UniRule"/>
</dbReference>
<dbReference type="GO" id="GO:0006260">
    <property type="term" value="P:DNA replication"/>
    <property type="evidence" value="ECO:0007669"/>
    <property type="project" value="UniProtKB-UniRule"/>
</dbReference>
<dbReference type="GO" id="GO:0045892">
    <property type="term" value="P:negative regulation of DNA-templated transcription"/>
    <property type="evidence" value="ECO:0007669"/>
    <property type="project" value="UniProtKB-UniRule"/>
</dbReference>
<dbReference type="GO" id="GO:0006508">
    <property type="term" value="P:proteolysis"/>
    <property type="evidence" value="ECO:0007669"/>
    <property type="project" value="InterPro"/>
</dbReference>
<dbReference type="GO" id="GO:0009432">
    <property type="term" value="P:SOS response"/>
    <property type="evidence" value="ECO:0007669"/>
    <property type="project" value="UniProtKB-UniRule"/>
</dbReference>
<dbReference type="CDD" id="cd06529">
    <property type="entry name" value="S24_LexA-like"/>
    <property type="match status" value="1"/>
</dbReference>
<dbReference type="FunFam" id="1.10.10.10:FF:000009">
    <property type="entry name" value="LexA repressor"/>
    <property type="match status" value="1"/>
</dbReference>
<dbReference type="FunFam" id="2.10.109.10:FF:000001">
    <property type="entry name" value="LexA repressor"/>
    <property type="match status" value="1"/>
</dbReference>
<dbReference type="Gene3D" id="2.10.109.10">
    <property type="entry name" value="Umud Fragment, subunit A"/>
    <property type="match status" value="1"/>
</dbReference>
<dbReference type="Gene3D" id="1.10.10.10">
    <property type="entry name" value="Winged helix-like DNA-binding domain superfamily/Winged helix DNA-binding domain"/>
    <property type="match status" value="1"/>
</dbReference>
<dbReference type="HAMAP" id="MF_00015">
    <property type="entry name" value="LexA"/>
    <property type="match status" value="1"/>
</dbReference>
<dbReference type="InterPro" id="IPR006200">
    <property type="entry name" value="LexA"/>
</dbReference>
<dbReference type="InterPro" id="IPR039418">
    <property type="entry name" value="LexA-like"/>
</dbReference>
<dbReference type="InterPro" id="IPR036286">
    <property type="entry name" value="LexA/Signal_pep-like_sf"/>
</dbReference>
<dbReference type="InterPro" id="IPR006199">
    <property type="entry name" value="LexA_DNA-bd_dom"/>
</dbReference>
<dbReference type="InterPro" id="IPR050077">
    <property type="entry name" value="LexA_repressor"/>
</dbReference>
<dbReference type="InterPro" id="IPR006197">
    <property type="entry name" value="Peptidase_S24_LexA"/>
</dbReference>
<dbReference type="InterPro" id="IPR015927">
    <property type="entry name" value="Peptidase_S24_S26A/B/C"/>
</dbReference>
<dbReference type="InterPro" id="IPR036388">
    <property type="entry name" value="WH-like_DNA-bd_sf"/>
</dbReference>
<dbReference type="InterPro" id="IPR036390">
    <property type="entry name" value="WH_DNA-bd_sf"/>
</dbReference>
<dbReference type="NCBIfam" id="TIGR00498">
    <property type="entry name" value="lexA"/>
    <property type="match status" value="1"/>
</dbReference>
<dbReference type="PANTHER" id="PTHR33516">
    <property type="entry name" value="LEXA REPRESSOR"/>
    <property type="match status" value="1"/>
</dbReference>
<dbReference type="PANTHER" id="PTHR33516:SF2">
    <property type="entry name" value="LEXA REPRESSOR-RELATED"/>
    <property type="match status" value="1"/>
</dbReference>
<dbReference type="Pfam" id="PF01726">
    <property type="entry name" value="LexA_DNA_bind"/>
    <property type="match status" value="1"/>
</dbReference>
<dbReference type="Pfam" id="PF00717">
    <property type="entry name" value="Peptidase_S24"/>
    <property type="match status" value="1"/>
</dbReference>
<dbReference type="PRINTS" id="PR00726">
    <property type="entry name" value="LEXASERPTASE"/>
</dbReference>
<dbReference type="SUPFAM" id="SSF51306">
    <property type="entry name" value="LexA/Signal peptidase"/>
    <property type="match status" value="1"/>
</dbReference>
<dbReference type="SUPFAM" id="SSF46785">
    <property type="entry name" value="Winged helix' DNA-binding domain"/>
    <property type="match status" value="1"/>
</dbReference>
<reference key="1">
    <citation type="journal article" date="2005" name="Science">
        <title>Life at depth: Photobacterium profundum genome sequence and expression analysis.</title>
        <authorList>
            <person name="Vezzi A."/>
            <person name="Campanaro S."/>
            <person name="D'Angelo M."/>
            <person name="Simonato F."/>
            <person name="Vitulo N."/>
            <person name="Lauro F.M."/>
            <person name="Cestaro A."/>
            <person name="Malacrida G."/>
            <person name="Simionati B."/>
            <person name="Cannata N."/>
            <person name="Romualdi C."/>
            <person name="Bartlett D.H."/>
            <person name="Valle G."/>
        </authorList>
    </citation>
    <scope>NUCLEOTIDE SEQUENCE [LARGE SCALE GENOMIC DNA]</scope>
    <source>
        <strain>ATCC BAA-1253 / SS9</strain>
    </source>
</reference>
<sequence>MIKAKIEDSGMPPTRAEIARELGFRSANAAEEHLKALARKEVIEIVPGASRGIRVLRHDEVEAKGLPLIGRVAAGEPILAQEHVETHYEVDPALFKPRADFLLRVNGMSMKDIGIMDGDLLAVHKTQDVHNGQVVVARVDDDVTVKRLDKQGSQVLLHAENEDFAPIVVDLTHQQLTIEGIAVGVIRTADWM</sequence>
<gene>
    <name evidence="1" type="primary">lexA</name>
    <name type="ordered locus">PBPRA0165</name>
</gene>
<comment type="function">
    <text evidence="1">Represses a number of genes involved in the response to DNA damage (SOS response), including recA and lexA. In the presence of single-stranded DNA, RecA interacts with LexA causing an autocatalytic cleavage which disrupts the DNA-binding part of LexA, leading to derepression of the SOS regulon and eventually DNA repair.</text>
</comment>
<comment type="catalytic activity">
    <reaction evidence="1">
        <text>Hydrolysis of Ala-|-Gly bond in repressor LexA.</text>
        <dbReference type="EC" id="3.4.21.88"/>
    </reaction>
</comment>
<comment type="subunit">
    <text evidence="1">Homodimer.</text>
</comment>
<comment type="similarity">
    <text evidence="1">Belongs to the peptidase S24 family.</text>
</comment>
<name>LEXA_PHOPR</name>
<feature type="chain" id="PRO_0000170065" description="LexA repressor">
    <location>
        <begin position="1"/>
        <end position="192"/>
    </location>
</feature>
<feature type="DNA-binding region" description="H-T-H motif" evidence="1">
    <location>
        <begin position="15"/>
        <end position="35"/>
    </location>
</feature>
<feature type="active site" description="For autocatalytic cleavage activity" evidence="1">
    <location>
        <position position="109"/>
    </location>
</feature>
<feature type="active site" description="For autocatalytic cleavage activity" evidence="1">
    <location>
        <position position="146"/>
    </location>
</feature>
<feature type="site" description="Cleavage; by autolysis" evidence="1">
    <location>
        <begin position="74"/>
        <end position="75"/>
    </location>
</feature>
<evidence type="ECO:0000255" key="1">
    <source>
        <dbReference type="HAMAP-Rule" id="MF_00015"/>
    </source>
</evidence>
<proteinExistence type="inferred from homology"/>